<reference key="1">
    <citation type="journal article" date="2010" name="J. Bacteriol.">
        <title>The genome of the amoeba symbiont 'Candidatus Amoebophilus asiaticus' reveals common mechanisms for host cell interaction among amoeba-associated bacteria.</title>
        <authorList>
            <person name="Schmitz-Esser S."/>
            <person name="Tischler P."/>
            <person name="Arnold R."/>
            <person name="Montanaro J."/>
            <person name="Wagner M."/>
            <person name="Rattei T."/>
            <person name="Horn M."/>
        </authorList>
    </citation>
    <scope>NUCLEOTIDE SEQUENCE [LARGE SCALE GENOMIC DNA]</scope>
    <source>
        <strain>5a2</strain>
    </source>
</reference>
<protein>
    <recommendedName>
        <fullName evidence="1">ATP-dependent protease subunit HslV</fullName>
        <ecNumber evidence="1">3.4.25.2</ecNumber>
    </recommendedName>
</protein>
<dbReference type="EC" id="3.4.25.2" evidence="1"/>
<dbReference type="EMBL" id="CP001102">
    <property type="protein sequence ID" value="ACE05487.1"/>
    <property type="molecule type" value="Genomic_DNA"/>
</dbReference>
<dbReference type="RefSeq" id="WP_012472259.1">
    <property type="nucleotide sequence ID" value="NC_010830.1"/>
</dbReference>
<dbReference type="SMR" id="B3EU68"/>
<dbReference type="STRING" id="452471.Aasi_0030"/>
<dbReference type="KEGG" id="aas:Aasi_0030"/>
<dbReference type="eggNOG" id="COG5405">
    <property type="taxonomic scope" value="Bacteria"/>
</dbReference>
<dbReference type="HOGENOM" id="CLU_093872_1_0_10"/>
<dbReference type="OrthoDB" id="9804884at2"/>
<dbReference type="Proteomes" id="UP000001227">
    <property type="component" value="Chromosome"/>
</dbReference>
<dbReference type="GO" id="GO:0009376">
    <property type="term" value="C:HslUV protease complex"/>
    <property type="evidence" value="ECO:0007669"/>
    <property type="project" value="UniProtKB-UniRule"/>
</dbReference>
<dbReference type="GO" id="GO:0005839">
    <property type="term" value="C:proteasome core complex"/>
    <property type="evidence" value="ECO:0007669"/>
    <property type="project" value="InterPro"/>
</dbReference>
<dbReference type="GO" id="GO:0046872">
    <property type="term" value="F:metal ion binding"/>
    <property type="evidence" value="ECO:0007669"/>
    <property type="project" value="UniProtKB-KW"/>
</dbReference>
<dbReference type="GO" id="GO:0004298">
    <property type="term" value="F:threonine-type endopeptidase activity"/>
    <property type="evidence" value="ECO:0007669"/>
    <property type="project" value="UniProtKB-KW"/>
</dbReference>
<dbReference type="GO" id="GO:0051603">
    <property type="term" value="P:proteolysis involved in protein catabolic process"/>
    <property type="evidence" value="ECO:0007669"/>
    <property type="project" value="InterPro"/>
</dbReference>
<dbReference type="CDD" id="cd01913">
    <property type="entry name" value="protease_HslV"/>
    <property type="match status" value="1"/>
</dbReference>
<dbReference type="Gene3D" id="3.60.20.10">
    <property type="entry name" value="Glutamine Phosphoribosylpyrophosphate, subunit 1, domain 1"/>
    <property type="match status" value="1"/>
</dbReference>
<dbReference type="HAMAP" id="MF_00248">
    <property type="entry name" value="HslV"/>
    <property type="match status" value="1"/>
</dbReference>
<dbReference type="InterPro" id="IPR022281">
    <property type="entry name" value="ATP-dep_Prtase_HsIV_su"/>
</dbReference>
<dbReference type="InterPro" id="IPR029055">
    <property type="entry name" value="Ntn_hydrolases_N"/>
</dbReference>
<dbReference type="InterPro" id="IPR001353">
    <property type="entry name" value="Proteasome_sua/b"/>
</dbReference>
<dbReference type="InterPro" id="IPR023333">
    <property type="entry name" value="Proteasome_suB-type"/>
</dbReference>
<dbReference type="NCBIfam" id="TIGR03692">
    <property type="entry name" value="ATP_dep_HslV"/>
    <property type="match status" value="1"/>
</dbReference>
<dbReference type="NCBIfam" id="NF003964">
    <property type="entry name" value="PRK05456.1"/>
    <property type="match status" value="1"/>
</dbReference>
<dbReference type="PANTHER" id="PTHR32194:SF0">
    <property type="entry name" value="ATP-DEPENDENT PROTEASE SUBUNIT HSLV"/>
    <property type="match status" value="1"/>
</dbReference>
<dbReference type="PANTHER" id="PTHR32194">
    <property type="entry name" value="METALLOPROTEASE TLDD"/>
    <property type="match status" value="1"/>
</dbReference>
<dbReference type="Pfam" id="PF00227">
    <property type="entry name" value="Proteasome"/>
    <property type="match status" value="1"/>
</dbReference>
<dbReference type="PIRSF" id="PIRSF039093">
    <property type="entry name" value="HslV"/>
    <property type="match status" value="1"/>
</dbReference>
<dbReference type="SUPFAM" id="SSF56235">
    <property type="entry name" value="N-terminal nucleophile aminohydrolases (Ntn hydrolases)"/>
    <property type="match status" value="1"/>
</dbReference>
<dbReference type="PROSITE" id="PS51476">
    <property type="entry name" value="PROTEASOME_BETA_2"/>
    <property type="match status" value="1"/>
</dbReference>
<evidence type="ECO:0000255" key="1">
    <source>
        <dbReference type="HAMAP-Rule" id="MF_00248"/>
    </source>
</evidence>
<proteinExistence type="inferred from homology"/>
<sequence length="179" mass="19547">MLKIKSTTVIAVMHNNEVAIGADGQATMGSTVVKGNVNKIRKLLDGKVLTGFAGSTADAFTLLDRFDEKLQRYFGHMKRSAIELAKDWRTDRYLRRLEAMLIAVNKEELLLISGTGDVIEPDNGIVTIGSGSLYAESAAIALKKHAPHLTAEEIVRESLTIAADICIYTNDNLTIEKIS</sequence>
<comment type="function">
    <text evidence="1">Protease subunit of a proteasome-like degradation complex believed to be a general protein degrading machinery.</text>
</comment>
<comment type="catalytic activity">
    <reaction evidence="1">
        <text>ATP-dependent cleavage of peptide bonds with broad specificity.</text>
        <dbReference type="EC" id="3.4.25.2"/>
    </reaction>
</comment>
<comment type="activity regulation">
    <text evidence="1">Allosterically activated by HslU binding.</text>
</comment>
<comment type="subunit">
    <text evidence="1">A double ring-shaped homohexamer of HslV is capped on each side by a ring-shaped HslU homohexamer. The assembly of the HslU/HslV complex is dependent on binding of ATP.</text>
</comment>
<comment type="subcellular location">
    <subcellularLocation>
        <location evidence="1">Cytoplasm</location>
    </subcellularLocation>
</comment>
<comment type="similarity">
    <text evidence="1">Belongs to the peptidase T1B family. HslV subfamily.</text>
</comment>
<accession>B3EU68</accession>
<organism>
    <name type="scientific">Amoebophilus asiaticus (strain 5a2)</name>
    <dbReference type="NCBI Taxonomy" id="452471"/>
    <lineage>
        <taxon>Bacteria</taxon>
        <taxon>Pseudomonadati</taxon>
        <taxon>Bacteroidota</taxon>
        <taxon>Cytophagia</taxon>
        <taxon>Cytophagales</taxon>
        <taxon>Amoebophilaceae</taxon>
        <taxon>Candidatus Amoebophilus</taxon>
    </lineage>
</organism>
<name>HSLV_AMOA5</name>
<feature type="chain" id="PRO_1000100868" description="ATP-dependent protease subunit HslV">
    <location>
        <begin position="1"/>
        <end position="179"/>
    </location>
</feature>
<feature type="active site" evidence="1">
    <location>
        <position position="7"/>
    </location>
</feature>
<feature type="binding site" evidence="1">
    <location>
        <position position="163"/>
    </location>
    <ligand>
        <name>Na(+)</name>
        <dbReference type="ChEBI" id="CHEBI:29101"/>
    </ligand>
</feature>
<feature type="binding site" evidence="1">
    <location>
        <position position="166"/>
    </location>
    <ligand>
        <name>Na(+)</name>
        <dbReference type="ChEBI" id="CHEBI:29101"/>
    </ligand>
</feature>
<feature type="binding site" evidence="1">
    <location>
        <position position="169"/>
    </location>
    <ligand>
        <name>Na(+)</name>
        <dbReference type="ChEBI" id="CHEBI:29101"/>
    </ligand>
</feature>
<keyword id="KW-0021">Allosteric enzyme</keyword>
<keyword id="KW-0963">Cytoplasm</keyword>
<keyword id="KW-0378">Hydrolase</keyword>
<keyword id="KW-0479">Metal-binding</keyword>
<keyword id="KW-0645">Protease</keyword>
<keyword id="KW-1185">Reference proteome</keyword>
<keyword id="KW-0915">Sodium</keyword>
<keyword id="KW-0888">Threonine protease</keyword>
<gene>
    <name evidence="1" type="primary">hslV</name>
    <name type="ordered locus">Aasi_0030</name>
</gene>